<gene>
    <name type="primary">Syce1l</name>
    <name type="synonym">Mmrp2</name>
</gene>
<name>SYC1L_MOUSE</name>
<protein>
    <recommendedName>
        <fullName>Synaptonemal complex central element protein 1-like</fullName>
    </recommendedName>
    <alternativeName>
        <fullName>Meiosis-related protein</fullName>
    </alternativeName>
</protein>
<sequence>MAAELEPLMAEWLGAEKAEDTRGQAASLNTMEDLLETVKKLQKEGSLEPQIEDLIHRINELQQGPAKKRSSEELGEAQALQEAMHRELDSLNEERVHLEEVLRKKQEAVSILKKHPQERDSDTPHLDAQQLEERLADLARQHKDLWEFHVLQQRLAQEISTMEHRKDQLLAERTLLRARLEKVEQRLQEARETWDSPGNCGLKTELEELEGQSQRSPEAQNDKGEASQEEQHHLETSEELPRTGTLC</sequence>
<dbReference type="EMBL" id="AY899936">
    <property type="protein sequence ID" value="AAX18326.1"/>
    <property type="molecule type" value="mRNA"/>
</dbReference>
<dbReference type="EMBL" id="AY899935">
    <property type="protein sequence ID" value="AAX18325.1"/>
    <property type="molecule type" value="mRNA"/>
</dbReference>
<dbReference type="EMBL" id="AK015606">
    <property type="protein sequence ID" value="BAB29903.1"/>
    <property type="molecule type" value="mRNA"/>
</dbReference>
<dbReference type="EMBL" id="BC100478">
    <property type="protein sequence ID" value="AAI00479.1"/>
    <property type="status" value="ALT_INIT"/>
    <property type="molecule type" value="mRNA"/>
</dbReference>
<dbReference type="EMBL" id="BC141326">
    <property type="protein sequence ID" value="AAI41327.1"/>
    <property type="molecule type" value="mRNA"/>
</dbReference>
<dbReference type="EMBL" id="BC141347">
    <property type="protein sequence ID" value="AAI41348.1"/>
    <property type="molecule type" value="mRNA"/>
</dbReference>
<dbReference type="CCDS" id="CCDS40483.1">
    <molecule id="Q5D525-1"/>
</dbReference>
<dbReference type="CCDS" id="CCDS40484.1">
    <molecule id="Q5D525-2"/>
</dbReference>
<dbReference type="CCDS" id="CCDS85617.1">
    <molecule id="Q5D525-3"/>
</dbReference>
<dbReference type="RefSeq" id="NP_001041610.1">
    <molecule id="Q5D525-1"/>
    <property type="nucleotide sequence ID" value="NM_001048145.1"/>
</dbReference>
<dbReference type="RefSeq" id="NP_001273423.1">
    <molecule id="Q5D525-3"/>
    <property type="nucleotide sequence ID" value="NM_001286494.1"/>
</dbReference>
<dbReference type="RefSeq" id="NP_083415.1">
    <molecule id="Q5D525-2"/>
    <property type="nucleotide sequence ID" value="NM_029139.1"/>
</dbReference>
<dbReference type="SMR" id="Q5D525"/>
<dbReference type="FunCoup" id="Q5D525">
    <property type="interactions" value="11"/>
</dbReference>
<dbReference type="IntAct" id="Q5D525">
    <property type="interactions" value="1"/>
</dbReference>
<dbReference type="STRING" id="10090.ENSMUSP00000092796"/>
<dbReference type="PhosphoSitePlus" id="Q5D525"/>
<dbReference type="PaxDb" id="10090-ENSMUSP00000092796"/>
<dbReference type="ProteomicsDB" id="258678">
    <molecule id="Q5D525-1"/>
</dbReference>
<dbReference type="ProteomicsDB" id="258679">
    <molecule id="Q5D525-2"/>
</dbReference>
<dbReference type="ProteomicsDB" id="258680">
    <molecule id="Q5D525-3"/>
</dbReference>
<dbReference type="Antibodypedia" id="67122">
    <property type="antibodies" value="55 antibodies from 10 providers"/>
</dbReference>
<dbReference type="Ensembl" id="ENSMUST00000034219.12">
    <molecule id="Q5D525-2"/>
    <property type="protein sequence ID" value="ENSMUSP00000034219.5"/>
    <property type="gene ID" value="ENSMUSG00000033409.15"/>
</dbReference>
<dbReference type="Ensembl" id="ENSMUST00000095173.3">
    <molecule id="Q5D525-1"/>
    <property type="protein sequence ID" value="ENSMUSP00000092796.2"/>
    <property type="gene ID" value="ENSMUSG00000033409.15"/>
</dbReference>
<dbReference type="Ensembl" id="ENSMUST00000212269.2">
    <molecule id="Q5D525-3"/>
    <property type="protein sequence ID" value="ENSMUSP00000148356.2"/>
    <property type="gene ID" value="ENSMUSG00000033409.15"/>
</dbReference>
<dbReference type="GeneID" id="668110"/>
<dbReference type="KEGG" id="mmu:668110"/>
<dbReference type="UCSC" id="uc009nnp.1">
    <molecule id="Q5D525-2"/>
    <property type="organism name" value="mouse"/>
</dbReference>
<dbReference type="UCSC" id="uc009nnq.1">
    <molecule id="Q5D525-1"/>
    <property type="organism name" value="mouse"/>
</dbReference>
<dbReference type="UCSC" id="uc012glc.1">
    <molecule id="Q5D525-3"/>
    <property type="organism name" value="mouse"/>
</dbReference>
<dbReference type="AGR" id="MGI:1922247"/>
<dbReference type="CTD" id="100130958"/>
<dbReference type="MGI" id="MGI:1922247">
    <property type="gene designation" value="Syce1l"/>
</dbReference>
<dbReference type="VEuPathDB" id="HostDB:ENSMUSG00000033409"/>
<dbReference type="eggNOG" id="ENOG502QZY9">
    <property type="taxonomic scope" value="Eukaryota"/>
</dbReference>
<dbReference type="GeneTree" id="ENSGT00390000017352"/>
<dbReference type="HOGENOM" id="CLU_1146884_0_0_1"/>
<dbReference type="InParanoid" id="Q5D525"/>
<dbReference type="OMA" id="QLHCQRK"/>
<dbReference type="OrthoDB" id="8931744at2759"/>
<dbReference type="PhylomeDB" id="Q5D525"/>
<dbReference type="BioGRID-ORCS" id="668110">
    <property type="hits" value="1 hit in 76 CRISPR screens"/>
</dbReference>
<dbReference type="ChiTaRS" id="Syce1l">
    <property type="organism name" value="mouse"/>
</dbReference>
<dbReference type="PRO" id="PR:Q5D525"/>
<dbReference type="Proteomes" id="UP000000589">
    <property type="component" value="Chromosome 8"/>
</dbReference>
<dbReference type="RNAct" id="Q5D525">
    <property type="molecule type" value="protein"/>
</dbReference>
<dbReference type="Bgee" id="ENSMUSG00000033409">
    <property type="expression patterns" value="Expressed in seminiferous tubule of testis and 30 other cell types or tissues"/>
</dbReference>
<dbReference type="GO" id="GO:0000795">
    <property type="term" value="C:synaptonemal complex"/>
    <property type="evidence" value="ECO:0007669"/>
    <property type="project" value="InterPro"/>
</dbReference>
<dbReference type="GO" id="GO:0007130">
    <property type="term" value="P:synaptonemal complex assembly"/>
    <property type="evidence" value="ECO:0007669"/>
    <property type="project" value="InterPro"/>
</dbReference>
<dbReference type="InterPro" id="IPR026676">
    <property type="entry name" value="SYCE1"/>
</dbReference>
<dbReference type="PANTHER" id="PTHR21731">
    <property type="entry name" value="SYNAPTONEMAL COMPLEX CENTRAL ELEMENT PROTEIN 1-LIKE"/>
    <property type="match status" value="1"/>
</dbReference>
<dbReference type="PANTHER" id="PTHR21731:SF1">
    <property type="entry name" value="SYNAPTONEMAL COMPLEX CENTRAL ELEMENT PROTEIN 1-LIKE"/>
    <property type="match status" value="1"/>
</dbReference>
<dbReference type="Pfam" id="PF15233">
    <property type="entry name" value="SYCE1"/>
    <property type="match status" value="2"/>
</dbReference>
<reference key="1">
    <citation type="journal article" date="2005" name="Mol. Biol. Rep.">
        <title>Identification of a new transcript specifically expressed in mouse spermatocytes: mmrp2.</title>
        <authorList>
            <person name="Gu S."/>
            <person name="Hu J."/>
            <person name="Song P."/>
            <person name="Gong W."/>
            <person name="Guo M."/>
        </authorList>
    </citation>
    <scope>NUCLEOTIDE SEQUENCE [MRNA] (ISOFORMS 1 AND 2)</scope>
    <scope>FUNCTION</scope>
    <scope>DEVELOPMENTAL STAGE</scope>
    <scope>TISSUE SPECIFICITY</scope>
    <source>
        <strain>BALB/cJ</strain>
        <tissue>Testis</tissue>
    </source>
</reference>
<reference key="2">
    <citation type="journal article" date="2005" name="Science">
        <title>The transcriptional landscape of the mammalian genome.</title>
        <authorList>
            <person name="Carninci P."/>
            <person name="Kasukawa T."/>
            <person name="Katayama S."/>
            <person name="Gough J."/>
            <person name="Frith M.C."/>
            <person name="Maeda N."/>
            <person name="Oyama R."/>
            <person name="Ravasi T."/>
            <person name="Lenhard B."/>
            <person name="Wells C."/>
            <person name="Kodzius R."/>
            <person name="Shimokawa K."/>
            <person name="Bajic V.B."/>
            <person name="Brenner S.E."/>
            <person name="Batalov S."/>
            <person name="Forrest A.R."/>
            <person name="Zavolan M."/>
            <person name="Davis M.J."/>
            <person name="Wilming L.G."/>
            <person name="Aidinis V."/>
            <person name="Allen J.E."/>
            <person name="Ambesi-Impiombato A."/>
            <person name="Apweiler R."/>
            <person name="Aturaliya R.N."/>
            <person name="Bailey T.L."/>
            <person name="Bansal M."/>
            <person name="Baxter L."/>
            <person name="Beisel K.W."/>
            <person name="Bersano T."/>
            <person name="Bono H."/>
            <person name="Chalk A.M."/>
            <person name="Chiu K.P."/>
            <person name="Choudhary V."/>
            <person name="Christoffels A."/>
            <person name="Clutterbuck D.R."/>
            <person name="Crowe M.L."/>
            <person name="Dalla E."/>
            <person name="Dalrymple B.P."/>
            <person name="de Bono B."/>
            <person name="Della Gatta G."/>
            <person name="di Bernardo D."/>
            <person name="Down T."/>
            <person name="Engstrom P."/>
            <person name="Fagiolini M."/>
            <person name="Faulkner G."/>
            <person name="Fletcher C.F."/>
            <person name="Fukushima T."/>
            <person name="Furuno M."/>
            <person name="Futaki S."/>
            <person name="Gariboldi M."/>
            <person name="Georgii-Hemming P."/>
            <person name="Gingeras T.R."/>
            <person name="Gojobori T."/>
            <person name="Green R.E."/>
            <person name="Gustincich S."/>
            <person name="Harbers M."/>
            <person name="Hayashi Y."/>
            <person name="Hensch T.K."/>
            <person name="Hirokawa N."/>
            <person name="Hill D."/>
            <person name="Huminiecki L."/>
            <person name="Iacono M."/>
            <person name="Ikeo K."/>
            <person name="Iwama A."/>
            <person name="Ishikawa T."/>
            <person name="Jakt M."/>
            <person name="Kanapin A."/>
            <person name="Katoh M."/>
            <person name="Kawasawa Y."/>
            <person name="Kelso J."/>
            <person name="Kitamura H."/>
            <person name="Kitano H."/>
            <person name="Kollias G."/>
            <person name="Krishnan S.P."/>
            <person name="Kruger A."/>
            <person name="Kummerfeld S.K."/>
            <person name="Kurochkin I.V."/>
            <person name="Lareau L.F."/>
            <person name="Lazarevic D."/>
            <person name="Lipovich L."/>
            <person name="Liu J."/>
            <person name="Liuni S."/>
            <person name="McWilliam S."/>
            <person name="Madan Babu M."/>
            <person name="Madera M."/>
            <person name="Marchionni L."/>
            <person name="Matsuda H."/>
            <person name="Matsuzawa S."/>
            <person name="Miki H."/>
            <person name="Mignone F."/>
            <person name="Miyake S."/>
            <person name="Morris K."/>
            <person name="Mottagui-Tabar S."/>
            <person name="Mulder N."/>
            <person name="Nakano N."/>
            <person name="Nakauchi H."/>
            <person name="Ng P."/>
            <person name="Nilsson R."/>
            <person name="Nishiguchi S."/>
            <person name="Nishikawa S."/>
            <person name="Nori F."/>
            <person name="Ohara O."/>
            <person name="Okazaki Y."/>
            <person name="Orlando V."/>
            <person name="Pang K.C."/>
            <person name="Pavan W.J."/>
            <person name="Pavesi G."/>
            <person name="Pesole G."/>
            <person name="Petrovsky N."/>
            <person name="Piazza S."/>
            <person name="Reed J."/>
            <person name="Reid J.F."/>
            <person name="Ring B.Z."/>
            <person name="Ringwald M."/>
            <person name="Rost B."/>
            <person name="Ruan Y."/>
            <person name="Salzberg S.L."/>
            <person name="Sandelin A."/>
            <person name="Schneider C."/>
            <person name="Schoenbach C."/>
            <person name="Sekiguchi K."/>
            <person name="Semple C.A."/>
            <person name="Seno S."/>
            <person name="Sessa L."/>
            <person name="Sheng Y."/>
            <person name="Shibata Y."/>
            <person name="Shimada H."/>
            <person name="Shimada K."/>
            <person name="Silva D."/>
            <person name="Sinclair B."/>
            <person name="Sperling S."/>
            <person name="Stupka E."/>
            <person name="Sugiura K."/>
            <person name="Sultana R."/>
            <person name="Takenaka Y."/>
            <person name="Taki K."/>
            <person name="Tammoja K."/>
            <person name="Tan S.L."/>
            <person name="Tang S."/>
            <person name="Taylor M.S."/>
            <person name="Tegner J."/>
            <person name="Teichmann S.A."/>
            <person name="Ueda H.R."/>
            <person name="van Nimwegen E."/>
            <person name="Verardo R."/>
            <person name="Wei C.L."/>
            <person name="Yagi K."/>
            <person name="Yamanishi H."/>
            <person name="Zabarovsky E."/>
            <person name="Zhu S."/>
            <person name="Zimmer A."/>
            <person name="Hide W."/>
            <person name="Bult C."/>
            <person name="Grimmond S.M."/>
            <person name="Teasdale R.D."/>
            <person name="Liu E.T."/>
            <person name="Brusic V."/>
            <person name="Quackenbush J."/>
            <person name="Wahlestedt C."/>
            <person name="Mattick J.S."/>
            <person name="Hume D.A."/>
            <person name="Kai C."/>
            <person name="Sasaki D."/>
            <person name="Tomaru Y."/>
            <person name="Fukuda S."/>
            <person name="Kanamori-Katayama M."/>
            <person name="Suzuki M."/>
            <person name="Aoki J."/>
            <person name="Arakawa T."/>
            <person name="Iida J."/>
            <person name="Imamura K."/>
            <person name="Itoh M."/>
            <person name="Kato T."/>
            <person name="Kawaji H."/>
            <person name="Kawagashira N."/>
            <person name="Kawashima T."/>
            <person name="Kojima M."/>
            <person name="Kondo S."/>
            <person name="Konno H."/>
            <person name="Nakano K."/>
            <person name="Ninomiya N."/>
            <person name="Nishio T."/>
            <person name="Okada M."/>
            <person name="Plessy C."/>
            <person name="Shibata K."/>
            <person name="Shiraki T."/>
            <person name="Suzuki S."/>
            <person name="Tagami M."/>
            <person name="Waki K."/>
            <person name="Watahiki A."/>
            <person name="Okamura-Oho Y."/>
            <person name="Suzuki H."/>
            <person name="Kawai J."/>
            <person name="Hayashizaki Y."/>
        </authorList>
    </citation>
    <scope>NUCLEOTIDE SEQUENCE [LARGE SCALE MRNA] (ISOFORM 2)</scope>
    <source>
        <strain>C57BL/6J</strain>
        <tissue>Testis</tissue>
    </source>
</reference>
<reference key="3">
    <citation type="journal article" date="2004" name="Genome Res.">
        <title>The status, quality, and expansion of the NIH full-length cDNA project: the Mammalian Gene Collection (MGC).</title>
        <authorList>
            <consortium name="The MGC Project Team"/>
        </authorList>
    </citation>
    <scope>NUCLEOTIDE SEQUENCE [LARGE SCALE MRNA] (ISOFORMS 1 AND 3)</scope>
    <source>
        <tissue>Brain</tissue>
        <tissue>Testis</tissue>
    </source>
</reference>
<keyword id="KW-0025">Alternative splicing</keyword>
<keyword id="KW-0175">Coiled coil</keyword>
<keyword id="KW-0469">Meiosis</keyword>
<keyword id="KW-1185">Reference proteome</keyword>
<evidence type="ECO:0000255" key="1"/>
<evidence type="ECO:0000256" key="2">
    <source>
        <dbReference type="SAM" id="MobiDB-lite"/>
    </source>
</evidence>
<evidence type="ECO:0000269" key="3">
    <source>
    </source>
</evidence>
<evidence type="ECO:0000303" key="4">
    <source>
    </source>
</evidence>
<evidence type="ECO:0000303" key="5">
    <source>
    </source>
</evidence>
<evidence type="ECO:0000303" key="6">
    <source>
    </source>
</evidence>
<evidence type="ECO:0000305" key="7"/>
<accession>Q5D525</accession>
<accession>B2RUQ1</accession>
<accession>Q497L4</accession>
<accession>Q5D524</accession>
<accession>Q9D5A5</accession>
<feature type="chain" id="PRO_0000341222" description="Synaptonemal complex central element protein 1-like">
    <location>
        <begin position="1"/>
        <end position="247"/>
    </location>
</feature>
<feature type="region of interest" description="Disordered" evidence="2">
    <location>
        <begin position="189"/>
        <end position="247"/>
    </location>
</feature>
<feature type="coiled-coil region" evidence="1">
    <location>
        <begin position="71"/>
        <end position="196"/>
    </location>
</feature>
<feature type="compositionally biased region" description="Basic and acidic residues" evidence="2">
    <location>
        <begin position="220"/>
        <end position="241"/>
    </location>
</feature>
<feature type="splice variant" id="VSP_034227" description="In isoform 3." evidence="4">
    <location>
        <begin position="23"/>
        <end position="43"/>
    </location>
</feature>
<feature type="splice variant" id="VSP_034228" description="In isoform 2." evidence="5 6">
    <original>HLDAQQLEERLADLARQHKDLWEFHVLQQRLAQEISTMEHRKDQLLAERTLLRARLEKVEQRLQEARETWDSPGNCGLKTELEELEGQSQRSPEAQNDKGEASQEEQHHLETSEELPRTGTLC</original>
    <variation>QKCTVQFSGFRPKKLGLLLSLQLGCSTTGGEAGGSGKATQGPLGVPCPAAATGPGDQHDGAQERSASCREDSAASQAGEGGAAAAGGQRDLGQPRELWAEDRAGGIGGAVPAQPRSSE</variation>
    <location>
        <begin position="125"/>
        <end position="247"/>
    </location>
</feature>
<feature type="sequence conflict" description="In Ref. 1; AAX18325/AAX18326." evidence="7" ref="1">
    <original>E</original>
    <variation>G</variation>
    <location>
        <position position="4"/>
    </location>
</feature>
<feature type="sequence conflict" description="In Ref. 1; AAX18325/AAX18326." evidence="7" ref="1">
    <original>A</original>
    <variation>E</variation>
    <location>
        <position position="10"/>
    </location>
</feature>
<feature type="sequence conflict" description="In Ref. 1; AAX18325/AAX18326." evidence="7" ref="1">
    <original>K</original>
    <variation>E</variation>
    <location>
        <position position="105"/>
    </location>
</feature>
<comment type="function">
    <text evidence="3">May be involved in meiosis. Isoform 1 may be involved in meiosis during spermatogenesis while isoform 2 is probably related to a later stage of meiosis, in the development stage of secondary spermatocytes and spermatids.</text>
</comment>
<comment type="alternative products">
    <event type="alternative splicing"/>
    <isoform>
        <id>Q5D525-1</id>
        <name>1</name>
        <name>mmrp2</name>
        <sequence type="displayed"/>
    </isoform>
    <isoform>
        <id>Q5D525-2</id>
        <name>2</name>
        <name>mmrp1</name>
        <sequence type="described" ref="VSP_034228"/>
    </isoform>
    <isoform>
        <id>Q5D525-3</id>
        <name>3</name>
        <sequence type="described" ref="VSP_034227"/>
    </isoform>
</comment>
<comment type="tissue specificity">
    <text evidence="3">Isoform 1 is abundantly expressed in testis and weakly in ovary, it is not found in other tissues. Isoform 2 is expressed in testis and poorly in brain, heart, lung and other examined tissues.</text>
</comment>
<comment type="developmental stage">
    <text evidence="3">Not detected in embryo. Isoform 1 is detected in testis at day 8 after birth while isoform 2 at day 17.</text>
</comment>
<comment type="similarity">
    <text evidence="7">Belongs to the SYCE family.</text>
</comment>
<comment type="sequence caution" evidence="7">
    <conflict type="erroneous initiation">
        <sequence resource="EMBL-CDS" id="AAI00479"/>
    </conflict>
    <text>Extended N-terminus.</text>
</comment>
<organism>
    <name type="scientific">Mus musculus</name>
    <name type="common">Mouse</name>
    <dbReference type="NCBI Taxonomy" id="10090"/>
    <lineage>
        <taxon>Eukaryota</taxon>
        <taxon>Metazoa</taxon>
        <taxon>Chordata</taxon>
        <taxon>Craniata</taxon>
        <taxon>Vertebrata</taxon>
        <taxon>Euteleostomi</taxon>
        <taxon>Mammalia</taxon>
        <taxon>Eutheria</taxon>
        <taxon>Euarchontoglires</taxon>
        <taxon>Glires</taxon>
        <taxon>Rodentia</taxon>
        <taxon>Myomorpha</taxon>
        <taxon>Muroidea</taxon>
        <taxon>Muridae</taxon>
        <taxon>Murinae</taxon>
        <taxon>Mus</taxon>
        <taxon>Mus</taxon>
    </lineage>
</organism>
<proteinExistence type="evidence at transcript level"/>